<name>NEPI_SALPC</name>
<feature type="chain" id="PRO_1000164497" description="Purine ribonucleoside efflux pump NepI">
    <location>
        <begin position="1"/>
        <end position="397"/>
    </location>
</feature>
<feature type="topological domain" description="Cytoplasmic" evidence="1">
    <location>
        <begin position="1"/>
        <end position="21"/>
    </location>
</feature>
<feature type="transmembrane region" description="Helical" evidence="1">
    <location>
        <begin position="22"/>
        <end position="42"/>
    </location>
</feature>
<feature type="topological domain" description="Periplasmic" evidence="1">
    <location>
        <begin position="43"/>
        <end position="54"/>
    </location>
</feature>
<feature type="transmembrane region" description="Helical" evidence="1">
    <location>
        <begin position="55"/>
        <end position="75"/>
    </location>
</feature>
<feature type="topological domain" description="Cytoplasmic" evidence="1">
    <location>
        <begin position="76"/>
        <end position="85"/>
    </location>
</feature>
<feature type="transmembrane region" description="Helical" evidence="1">
    <location>
        <begin position="86"/>
        <end position="106"/>
    </location>
</feature>
<feature type="topological domain" description="Periplasmic" evidence="1">
    <location>
        <position position="107"/>
    </location>
</feature>
<feature type="transmembrane region" description="Helical" evidence="1">
    <location>
        <begin position="108"/>
        <end position="128"/>
    </location>
</feature>
<feature type="topological domain" description="Cytoplasmic" evidence="1">
    <location>
        <begin position="129"/>
        <end position="147"/>
    </location>
</feature>
<feature type="transmembrane region" description="Helical" evidence="1">
    <location>
        <begin position="148"/>
        <end position="168"/>
    </location>
</feature>
<feature type="topological domain" description="Periplasmic" evidence="1">
    <location>
        <begin position="169"/>
        <end position="175"/>
    </location>
</feature>
<feature type="transmembrane region" description="Helical" evidence="1">
    <location>
        <begin position="176"/>
        <end position="196"/>
    </location>
</feature>
<feature type="topological domain" description="Cytoplasmic" evidence="1">
    <location>
        <begin position="197"/>
        <end position="215"/>
    </location>
</feature>
<feature type="transmembrane region" description="Helical" evidence="1">
    <location>
        <begin position="216"/>
        <end position="236"/>
    </location>
</feature>
<feature type="topological domain" description="Periplasmic" evidence="1">
    <location>
        <begin position="237"/>
        <end position="255"/>
    </location>
</feature>
<feature type="transmembrane region" description="Helical" evidence="1">
    <location>
        <begin position="256"/>
        <end position="276"/>
    </location>
</feature>
<feature type="topological domain" description="Cytoplasmic" evidence="1">
    <location>
        <begin position="277"/>
        <end position="281"/>
    </location>
</feature>
<feature type="transmembrane region" description="Helical" evidence="1">
    <location>
        <begin position="282"/>
        <end position="302"/>
    </location>
</feature>
<feature type="topological domain" description="Periplasmic" evidence="1">
    <location>
        <begin position="303"/>
        <end position="305"/>
    </location>
</feature>
<feature type="transmembrane region" description="Helical" evidence="1">
    <location>
        <begin position="306"/>
        <end position="326"/>
    </location>
</feature>
<feature type="topological domain" description="Cytoplasmic" evidence="1">
    <location>
        <begin position="327"/>
        <end position="343"/>
    </location>
</feature>
<feature type="transmembrane region" description="Helical" evidence="1">
    <location>
        <begin position="344"/>
        <end position="364"/>
    </location>
</feature>
<feature type="topological domain" description="Periplasmic" evidence="1">
    <location>
        <begin position="365"/>
        <end position="366"/>
    </location>
</feature>
<feature type="transmembrane region" description="Helical" evidence="1">
    <location>
        <begin position="367"/>
        <end position="387"/>
    </location>
</feature>
<feature type="topological domain" description="Cytoplasmic" evidence="1">
    <location>
        <begin position="388"/>
        <end position="397"/>
    </location>
</feature>
<proteinExistence type="inferred from homology"/>
<protein>
    <recommendedName>
        <fullName evidence="1">Purine ribonucleoside efflux pump NepI</fullName>
    </recommendedName>
</protein>
<evidence type="ECO:0000255" key="1">
    <source>
        <dbReference type="HAMAP-Rule" id="MF_01189"/>
    </source>
</evidence>
<gene>
    <name evidence="1" type="primary">nepI</name>
    <name type="ordered locus">SPC_3855</name>
</gene>
<keyword id="KW-0050">Antiport</keyword>
<keyword id="KW-0997">Cell inner membrane</keyword>
<keyword id="KW-1003">Cell membrane</keyword>
<keyword id="KW-0472">Membrane</keyword>
<keyword id="KW-0812">Transmembrane</keyword>
<keyword id="KW-1133">Transmembrane helix</keyword>
<keyword id="KW-0813">Transport</keyword>
<comment type="function">
    <text evidence="1">Involved in the efflux of purine ribonucleosides, such as inosine and guanosine.</text>
</comment>
<comment type="catalytic activity">
    <reaction evidence="1">
        <text>inosine(in) + H(+)(out) = inosine(out) + H(+)(in)</text>
        <dbReference type="Rhea" id="RHEA:29211"/>
        <dbReference type="ChEBI" id="CHEBI:15378"/>
        <dbReference type="ChEBI" id="CHEBI:17596"/>
    </reaction>
    <physiologicalReaction direction="left-to-right" evidence="1">
        <dbReference type="Rhea" id="RHEA:29212"/>
    </physiologicalReaction>
</comment>
<comment type="catalytic activity">
    <reaction evidence="1">
        <text>guanosine(in) + H(+)(out) = guanosine(out) + H(+)(in)</text>
        <dbReference type="Rhea" id="RHEA:29583"/>
        <dbReference type="ChEBI" id="CHEBI:15378"/>
        <dbReference type="ChEBI" id="CHEBI:16750"/>
    </reaction>
    <physiologicalReaction direction="left-to-right" evidence="1">
        <dbReference type="Rhea" id="RHEA:29584"/>
    </physiologicalReaction>
</comment>
<comment type="subcellular location">
    <subcellularLocation>
        <location evidence="1">Cell inner membrane</location>
        <topology evidence="1">Multi-pass membrane protein</topology>
    </subcellularLocation>
</comment>
<comment type="similarity">
    <text evidence="1">Belongs to the major facilitator superfamily. DHA1 family. NepI (TC 2.A.1.2.26) subfamily.</text>
</comment>
<dbReference type="EMBL" id="CP000857">
    <property type="protein sequence ID" value="ACN47928.1"/>
    <property type="molecule type" value="Genomic_DNA"/>
</dbReference>
<dbReference type="RefSeq" id="WP_001004798.1">
    <property type="nucleotide sequence ID" value="NC_012125.1"/>
</dbReference>
<dbReference type="SMR" id="C0Q212"/>
<dbReference type="KEGG" id="sei:SPC_3855"/>
<dbReference type="HOGENOM" id="CLU_001265_61_1_6"/>
<dbReference type="Proteomes" id="UP000001599">
    <property type="component" value="Chromosome"/>
</dbReference>
<dbReference type="GO" id="GO:0005886">
    <property type="term" value="C:plasma membrane"/>
    <property type="evidence" value="ECO:0007669"/>
    <property type="project" value="UniProtKB-SubCell"/>
</dbReference>
<dbReference type="GO" id="GO:0015297">
    <property type="term" value="F:antiporter activity"/>
    <property type="evidence" value="ECO:0007669"/>
    <property type="project" value="UniProtKB-KW"/>
</dbReference>
<dbReference type="GO" id="GO:0015211">
    <property type="term" value="F:purine nucleoside transmembrane transporter activity"/>
    <property type="evidence" value="ECO:0007669"/>
    <property type="project" value="UniProtKB-UniRule"/>
</dbReference>
<dbReference type="CDD" id="cd17324">
    <property type="entry name" value="MFS_NepI_like"/>
    <property type="match status" value="1"/>
</dbReference>
<dbReference type="FunFam" id="1.20.1250.20:FF:000113">
    <property type="entry name" value="Purine ribonucleoside efflux pump NepI"/>
    <property type="match status" value="1"/>
</dbReference>
<dbReference type="Gene3D" id="1.20.1250.20">
    <property type="entry name" value="MFS general substrate transporter like domains"/>
    <property type="match status" value="1"/>
</dbReference>
<dbReference type="HAMAP" id="MF_01189">
    <property type="entry name" value="MFS_NepI"/>
    <property type="match status" value="1"/>
</dbReference>
<dbReference type="InterPro" id="IPR011701">
    <property type="entry name" value="MFS"/>
</dbReference>
<dbReference type="InterPro" id="IPR020846">
    <property type="entry name" value="MFS_dom"/>
</dbReference>
<dbReference type="InterPro" id="IPR050189">
    <property type="entry name" value="MFS_Efflux_Transporters"/>
</dbReference>
<dbReference type="InterPro" id="IPR023680">
    <property type="entry name" value="MFS_NepI"/>
</dbReference>
<dbReference type="InterPro" id="IPR036259">
    <property type="entry name" value="MFS_trans_sf"/>
</dbReference>
<dbReference type="NCBIfam" id="NF007578">
    <property type="entry name" value="PRK10213.1"/>
    <property type="match status" value="1"/>
</dbReference>
<dbReference type="PANTHER" id="PTHR43124">
    <property type="entry name" value="PURINE EFFLUX PUMP PBUE"/>
    <property type="match status" value="1"/>
</dbReference>
<dbReference type="PANTHER" id="PTHR43124:SF5">
    <property type="entry name" value="PURINE RIBONUCLEOSIDE EFFLUX PUMP NEPI"/>
    <property type="match status" value="1"/>
</dbReference>
<dbReference type="Pfam" id="PF07690">
    <property type="entry name" value="MFS_1"/>
    <property type="match status" value="1"/>
</dbReference>
<dbReference type="SUPFAM" id="SSF103473">
    <property type="entry name" value="MFS general substrate transporter"/>
    <property type="match status" value="1"/>
</dbReference>
<dbReference type="PROSITE" id="PS50850">
    <property type="entry name" value="MFS"/>
    <property type="match status" value="1"/>
</dbReference>
<reference key="1">
    <citation type="journal article" date="2009" name="PLoS ONE">
        <title>Salmonella paratyphi C: genetic divergence from Salmonella choleraesuis and pathogenic convergence with Salmonella typhi.</title>
        <authorList>
            <person name="Liu W.-Q."/>
            <person name="Feng Y."/>
            <person name="Wang Y."/>
            <person name="Zou Q.-H."/>
            <person name="Chen F."/>
            <person name="Guo J.-T."/>
            <person name="Peng Y.-H."/>
            <person name="Jin Y."/>
            <person name="Li Y.-G."/>
            <person name="Hu S.-N."/>
            <person name="Johnston R.N."/>
            <person name="Liu G.-R."/>
            <person name="Liu S.-L."/>
        </authorList>
    </citation>
    <scope>NUCLEOTIDE SEQUENCE [LARGE SCALE GENOMIC DNA]</scope>
    <source>
        <strain>RKS4594</strain>
    </source>
</reference>
<sequence length="397" mass="41690">MNENIAEKFRADGVARPNWSAVFAVAFCVACLITVEFLPVSLLTPMAQDLGISEGVAGQSVTVTAFVAMFSSLFITQIIQATDRRYIVILFAVLLTASCLMVSFANSFTLLLLGRACLGLALGGFWAMSASLTMRLVPARTVPKALSVIFGAVSIALVIAAPLGSFLGGIIGWRNVFNAAAVMGVLCVIWVVKSLPSLPGEPSHQKQNMFSLLQRPGVMAGMIAIFMSFAGQFAFFTYIRPVYMNLAGFDVDGLTLVLLSFGIASFVGTSFSSYVLKRSVKLALAGAPLLLALSALTLIVWGSDKTVAAAIAIIWGLAFALVPVGWSTWITRSLADQAEKAGSIQVAVIQLANTCGAAVGGYALDNFGLLSPLALSGGLMLLTALVVAAKVRITPMS</sequence>
<accession>C0Q212</accession>
<organism>
    <name type="scientific">Salmonella paratyphi C (strain RKS4594)</name>
    <dbReference type="NCBI Taxonomy" id="476213"/>
    <lineage>
        <taxon>Bacteria</taxon>
        <taxon>Pseudomonadati</taxon>
        <taxon>Pseudomonadota</taxon>
        <taxon>Gammaproteobacteria</taxon>
        <taxon>Enterobacterales</taxon>
        <taxon>Enterobacteriaceae</taxon>
        <taxon>Salmonella</taxon>
    </lineage>
</organism>